<comment type="function">
    <text evidence="1">Catalyzes the conversion of 1-hydroxy-2-methyl-2-(E)-butenyl 4-diphosphate (HMBPP) into a mixture of isopentenyl diphosphate (IPP) and dimethylallyl diphosphate (DMAPP). Acts in the terminal step of the DOXP/MEP pathway for isoprenoid precursor biosynthesis.</text>
</comment>
<comment type="catalytic activity">
    <reaction evidence="1">
        <text>isopentenyl diphosphate + 2 oxidized [2Fe-2S]-[ferredoxin] + H2O = (2E)-4-hydroxy-3-methylbut-2-enyl diphosphate + 2 reduced [2Fe-2S]-[ferredoxin] + 2 H(+)</text>
        <dbReference type="Rhea" id="RHEA:24488"/>
        <dbReference type="Rhea" id="RHEA-COMP:10000"/>
        <dbReference type="Rhea" id="RHEA-COMP:10001"/>
        <dbReference type="ChEBI" id="CHEBI:15377"/>
        <dbReference type="ChEBI" id="CHEBI:15378"/>
        <dbReference type="ChEBI" id="CHEBI:33737"/>
        <dbReference type="ChEBI" id="CHEBI:33738"/>
        <dbReference type="ChEBI" id="CHEBI:128753"/>
        <dbReference type="ChEBI" id="CHEBI:128769"/>
        <dbReference type="EC" id="1.17.7.4"/>
    </reaction>
</comment>
<comment type="catalytic activity">
    <reaction evidence="1">
        <text>dimethylallyl diphosphate + 2 oxidized [2Fe-2S]-[ferredoxin] + H2O = (2E)-4-hydroxy-3-methylbut-2-enyl diphosphate + 2 reduced [2Fe-2S]-[ferredoxin] + 2 H(+)</text>
        <dbReference type="Rhea" id="RHEA:24825"/>
        <dbReference type="Rhea" id="RHEA-COMP:10000"/>
        <dbReference type="Rhea" id="RHEA-COMP:10001"/>
        <dbReference type="ChEBI" id="CHEBI:15377"/>
        <dbReference type="ChEBI" id="CHEBI:15378"/>
        <dbReference type="ChEBI" id="CHEBI:33737"/>
        <dbReference type="ChEBI" id="CHEBI:33738"/>
        <dbReference type="ChEBI" id="CHEBI:57623"/>
        <dbReference type="ChEBI" id="CHEBI:128753"/>
        <dbReference type="EC" id="1.17.7.4"/>
    </reaction>
</comment>
<comment type="cofactor">
    <cofactor evidence="1">
        <name>[4Fe-4S] cluster</name>
        <dbReference type="ChEBI" id="CHEBI:49883"/>
    </cofactor>
    <text evidence="1">Binds 1 [4Fe-4S] cluster per subunit.</text>
</comment>
<comment type="pathway">
    <text evidence="1">Isoprenoid biosynthesis; dimethylallyl diphosphate biosynthesis; dimethylallyl diphosphate from (2E)-4-hydroxy-3-methylbutenyl diphosphate: step 1/1.</text>
</comment>
<comment type="pathway">
    <text evidence="1">Isoprenoid biosynthesis; isopentenyl diphosphate biosynthesis via DXP pathway; isopentenyl diphosphate from 1-deoxy-D-xylulose 5-phosphate: step 6/6.</text>
</comment>
<comment type="similarity">
    <text evidence="1">Belongs to the IspH family.</text>
</comment>
<proteinExistence type="inferred from homology"/>
<feature type="chain" id="PRO_1000021081" description="4-hydroxy-3-methylbut-2-enyl diphosphate reductase">
    <location>
        <begin position="1"/>
        <end position="311"/>
    </location>
</feature>
<feature type="active site" description="Proton donor" evidence="1">
    <location>
        <position position="126"/>
    </location>
</feature>
<feature type="binding site" evidence="1">
    <location>
        <position position="12"/>
    </location>
    <ligand>
        <name>[4Fe-4S] cluster</name>
        <dbReference type="ChEBI" id="CHEBI:49883"/>
    </ligand>
</feature>
<feature type="binding site" evidence="1">
    <location>
        <position position="41"/>
    </location>
    <ligand>
        <name>(2E)-4-hydroxy-3-methylbut-2-enyl diphosphate</name>
        <dbReference type="ChEBI" id="CHEBI:128753"/>
    </ligand>
</feature>
<feature type="binding site" evidence="1">
    <location>
        <position position="41"/>
    </location>
    <ligand>
        <name>dimethylallyl diphosphate</name>
        <dbReference type="ChEBI" id="CHEBI:57623"/>
    </ligand>
</feature>
<feature type="binding site" evidence="1">
    <location>
        <position position="41"/>
    </location>
    <ligand>
        <name>isopentenyl diphosphate</name>
        <dbReference type="ChEBI" id="CHEBI:128769"/>
    </ligand>
</feature>
<feature type="binding site" evidence="1">
    <location>
        <position position="74"/>
    </location>
    <ligand>
        <name>(2E)-4-hydroxy-3-methylbut-2-enyl diphosphate</name>
        <dbReference type="ChEBI" id="CHEBI:128753"/>
    </ligand>
</feature>
<feature type="binding site" evidence="1">
    <location>
        <position position="74"/>
    </location>
    <ligand>
        <name>dimethylallyl diphosphate</name>
        <dbReference type="ChEBI" id="CHEBI:57623"/>
    </ligand>
</feature>
<feature type="binding site" evidence="1">
    <location>
        <position position="74"/>
    </location>
    <ligand>
        <name>isopentenyl diphosphate</name>
        <dbReference type="ChEBI" id="CHEBI:128769"/>
    </ligand>
</feature>
<feature type="binding site" evidence="1">
    <location>
        <position position="96"/>
    </location>
    <ligand>
        <name>[4Fe-4S] cluster</name>
        <dbReference type="ChEBI" id="CHEBI:49883"/>
    </ligand>
</feature>
<feature type="binding site" evidence="1">
    <location>
        <position position="124"/>
    </location>
    <ligand>
        <name>(2E)-4-hydroxy-3-methylbut-2-enyl diphosphate</name>
        <dbReference type="ChEBI" id="CHEBI:128753"/>
    </ligand>
</feature>
<feature type="binding site" evidence="1">
    <location>
        <position position="124"/>
    </location>
    <ligand>
        <name>dimethylallyl diphosphate</name>
        <dbReference type="ChEBI" id="CHEBI:57623"/>
    </ligand>
</feature>
<feature type="binding site" evidence="1">
    <location>
        <position position="124"/>
    </location>
    <ligand>
        <name>isopentenyl diphosphate</name>
        <dbReference type="ChEBI" id="CHEBI:128769"/>
    </ligand>
</feature>
<feature type="binding site" evidence="1">
    <location>
        <position position="167"/>
    </location>
    <ligand>
        <name>(2E)-4-hydroxy-3-methylbut-2-enyl diphosphate</name>
        <dbReference type="ChEBI" id="CHEBI:128753"/>
    </ligand>
</feature>
<feature type="binding site" evidence="1">
    <location>
        <position position="197"/>
    </location>
    <ligand>
        <name>[4Fe-4S] cluster</name>
        <dbReference type="ChEBI" id="CHEBI:49883"/>
    </ligand>
</feature>
<feature type="binding site" evidence="1">
    <location>
        <position position="225"/>
    </location>
    <ligand>
        <name>(2E)-4-hydroxy-3-methylbut-2-enyl diphosphate</name>
        <dbReference type="ChEBI" id="CHEBI:128753"/>
    </ligand>
</feature>
<feature type="binding site" evidence="1">
    <location>
        <position position="225"/>
    </location>
    <ligand>
        <name>dimethylallyl diphosphate</name>
        <dbReference type="ChEBI" id="CHEBI:57623"/>
    </ligand>
</feature>
<feature type="binding site" evidence="1">
    <location>
        <position position="225"/>
    </location>
    <ligand>
        <name>isopentenyl diphosphate</name>
        <dbReference type="ChEBI" id="CHEBI:128769"/>
    </ligand>
</feature>
<feature type="binding site" evidence="1">
    <location>
        <position position="226"/>
    </location>
    <ligand>
        <name>(2E)-4-hydroxy-3-methylbut-2-enyl diphosphate</name>
        <dbReference type="ChEBI" id="CHEBI:128753"/>
    </ligand>
</feature>
<feature type="binding site" evidence="1">
    <location>
        <position position="226"/>
    </location>
    <ligand>
        <name>dimethylallyl diphosphate</name>
        <dbReference type="ChEBI" id="CHEBI:57623"/>
    </ligand>
</feature>
<feature type="binding site" evidence="1">
    <location>
        <position position="226"/>
    </location>
    <ligand>
        <name>isopentenyl diphosphate</name>
        <dbReference type="ChEBI" id="CHEBI:128769"/>
    </ligand>
</feature>
<feature type="binding site" evidence="1">
    <location>
        <position position="227"/>
    </location>
    <ligand>
        <name>(2E)-4-hydroxy-3-methylbut-2-enyl diphosphate</name>
        <dbReference type="ChEBI" id="CHEBI:128753"/>
    </ligand>
</feature>
<feature type="binding site" evidence="1">
    <location>
        <position position="227"/>
    </location>
    <ligand>
        <name>dimethylallyl diphosphate</name>
        <dbReference type="ChEBI" id="CHEBI:57623"/>
    </ligand>
</feature>
<feature type="binding site" evidence="1">
    <location>
        <position position="227"/>
    </location>
    <ligand>
        <name>isopentenyl diphosphate</name>
        <dbReference type="ChEBI" id="CHEBI:128769"/>
    </ligand>
</feature>
<feature type="binding site" evidence="1">
    <location>
        <position position="269"/>
    </location>
    <ligand>
        <name>(2E)-4-hydroxy-3-methylbut-2-enyl diphosphate</name>
        <dbReference type="ChEBI" id="CHEBI:128753"/>
    </ligand>
</feature>
<feature type="binding site" evidence="1">
    <location>
        <position position="269"/>
    </location>
    <ligand>
        <name>dimethylallyl diphosphate</name>
        <dbReference type="ChEBI" id="CHEBI:57623"/>
    </ligand>
</feature>
<feature type="binding site" evidence="1">
    <location>
        <position position="269"/>
    </location>
    <ligand>
        <name>isopentenyl diphosphate</name>
        <dbReference type="ChEBI" id="CHEBI:128769"/>
    </ligand>
</feature>
<accession>A4SIX8</accession>
<name>ISPH_AERS4</name>
<gene>
    <name evidence="1" type="primary">ispH</name>
    <name type="ordered locus">ASA_0687</name>
</gene>
<organism>
    <name type="scientific">Aeromonas salmonicida (strain A449)</name>
    <dbReference type="NCBI Taxonomy" id="382245"/>
    <lineage>
        <taxon>Bacteria</taxon>
        <taxon>Pseudomonadati</taxon>
        <taxon>Pseudomonadota</taxon>
        <taxon>Gammaproteobacteria</taxon>
        <taxon>Aeromonadales</taxon>
        <taxon>Aeromonadaceae</taxon>
        <taxon>Aeromonas</taxon>
    </lineage>
</organism>
<dbReference type="EC" id="1.17.7.4" evidence="1"/>
<dbReference type="EMBL" id="CP000644">
    <property type="protein sequence ID" value="ABO88850.1"/>
    <property type="molecule type" value="Genomic_DNA"/>
</dbReference>
<dbReference type="RefSeq" id="WP_005313459.1">
    <property type="nucleotide sequence ID" value="NC_009348.1"/>
</dbReference>
<dbReference type="SMR" id="A4SIX8"/>
<dbReference type="STRING" id="29491.GCA_000820065_01807"/>
<dbReference type="KEGG" id="asa:ASA_0687"/>
<dbReference type="eggNOG" id="COG0761">
    <property type="taxonomic scope" value="Bacteria"/>
</dbReference>
<dbReference type="HOGENOM" id="CLU_027486_1_1_6"/>
<dbReference type="UniPathway" id="UPA00056">
    <property type="reaction ID" value="UER00097"/>
</dbReference>
<dbReference type="UniPathway" id="UPA00059">
    <property type="reaction ID" value="UER00105"/>
</dbReference>
<dbReference type="Proteomes" id="UP000000225">
    <property type="component" value="Chromosome"/>
</dbReference>
<dbReference type="GO" id="GO:0051539">
    <property type="term" value="F:4 iron, 4 sulfur cluster binding"/>
    <property type="evidence" value="ECO:0007669"/>
    <property type="project" value="UniProtKB-UniRule"/>
</dbReference>
<dbReference type="GO" id="GO:0051745">
    <property type="term" value="F:4-hydroxy-3-methylbut-2-enyl diphosphate reductase activity"/>
    <property type="evidence" value="ECO:0007669"/>
    <property type="project" value="UniProtKB-UniRule"/>
</dbReference>
<dbReference type="GO" id="GO:0046872">
    <property type="term" value="F:metal ion binding"/>
    <property type="evidence" value="ECO:0007669"/>
    <property type="project" value="UniProtKB-KW"/>
</dbReference>
<dbReference type="GO" id="GO:0050992">
    <property type="term" value="P:dimethylallyl diphosphate biosynthetic process"/>
    <property type="evidence" value="ECO:0007669"/>
    <property type="project" value="UniProtKB-UniRule"/>
</dbReference>
<dbReference type="GO" id="GO:0019288">
    <property type="term" value="P:isopentenyl diphosphate biosynthetic process, methylerythritol 4-phosphate pathway"/>
    <property type="evidence" value="ECO:0007669"/>
    <property type="project" value="UniProtKB-UniRule"/>
</dbReference>
<dbReference type="GO" id="GO:0016114">
    <property type="term" value="P:terpenoid biosynthetic process"/>
    <property type="evidence" value="ECO:0007669"/>
    <property type="project" value="UniProtKB-UniRule"/>
</dbReference>
<dbReference type="CDD" id="cd13944">
    <property type="entry name" value="lytB_ispH"/>
    <property type="match status" value="1"/>
</dbReference>
<dbReference type="Gene3D" id="3.40.50.11270">
    <property type="match status" value="1"/>
</dbReference>
<dbReference type="Gene3D" id="3.40.1010.20">
    <property type="entry name" value="4-hydroxy-3-methylbut-2-enyl diphosphate reductase, catalytic domain"/>
    <property type="match status" value="2"/>
</dbReference>
<dbReference type="HAMAP" id="MF_00191">
    <property type="entry name" value="IspH"/>
    <property type="match status" value="1"/>
</dbReference>
<dbReference type="InterPro" id="IPR003451">
    <property type="entry name" value="LytB/IspH"/>
</dbReference>
<dbReference type="NCBIfam" id="TIGR00216">
    <property type="entry name" value="ispH_lytB"/>
    <property type="match status" value="1"/>
</dbReference>
<dbReference type="NCBIfam" id="NF002188">
    <property type="entry name" value="PRK01045.1-2"/>
    <property type="match status" value="1"/>
</dbReference>
<dbReference type="NCBIfam" id="NF002190">
    <property type="entry name" value="PRK01045.1-4"/>
    <property type="match status" value="1"/>
</dbReference>
<dbReference type="PANTHER" id="PTHR30426">
    <property type="entry name" value="4-HYDROXY-3-METHYLBUT-2-ENYL DIPHOSPHATE REDUCTASE"/>
    <property type="match status" value="1"/>
</dbReference>
<dbReference type="PANTHER" id="PTHR30426:SF0">
    <property type="entry name" value="4-HYDROXY-3-METHYLBUT-2-ENYL DIPHOSPHATE REDUCTASE"/>
    <property type="match status" value="1"/>
</dbReference>
<dbReference type="Pfam" id="PF02401">
    <property type="entry name" value="LYTB"/>
    <property type="match status" value="1"/>
</dbReference>
<protein>
    <recommendedName>
        <fullName evidence="1">4-hydroxy-3-methylbut-2-enyl diphosphate reductase</fullName>
        <shortName evidence="1">HMBPP reductase</shortName>
        <ecNumber evidence="1">1.17.7.4</ecNumber>
    </recommendedName>
</protein>
<sequence length="311" mass="34111">MDILLANPRGFCAGVDRAISIVESALEKFGAPIYVRHEVVHNRYVVNKLKEAGAVFVEELDEVPDDSIVIFSAHGVAKTVREMAKSRALKVFDATCPLVTKVHMEVHRASRKGSEAVLIGHAGHPEVIGTMGQYENREGGMYLVETPDDVARLKVKNPDDLCFVTQTTLSVDETSDVIDALRKQFPKIQGPRKDDICYATQNRQDAVREMAGLVDVMLVVGSRNSSNSNRLRELAEKVGSKAYLIDDASMIETVWLEGVKAIGVTAGASAPDVLVQNVIARLRELGGNMVVEHPGREENVVFEVPPELRII</sequence>
<evidence type="ECO:0000255" key="1">
    <source>
        <dbReference type="HAMAP-Rule" id="MF_00191"/>
    </source>
</evidence>
<reference key="1">
    <citation type="journal article" date="2008" name="BMC Genomics">
        <title>The genome of Aeromonas salmonicida subsp. salmonicida A449: insights into the evolution of a fish pathogen.</title>
        <authorList>
            <person name="Reith M.E."/>
            <person name="Singh R.K."/>
            <person name="Curtis B."/>
            <person name="Boyd J.M."/>
            <person name="Bouevitch A."/>
            <person name="Kimball J."/>
            <person name="Munholland J."/>
            <person name="Murphy C."/>
            <person name="Sarty D."/>
            <person name="Williams J."/>
            <person name="Nash J.H."/>
            <person name="Johnson S.C."/>
            <person name="Brown L.L."/>
        </authorList>
    </citation>
    <scope>NUCLEOTIDE SEQUENCE [LARGE SCALE GENOMIC DNA]</scope>
    <source>
        <strain>A449</strain>
    </source>
</reference>
<keyword id="KW-0004">4Fe-4S</keyword>
<keyword id="KW-0408">Iron</keyword>
<keyword id="KW-0411">Iron-sulfur</keyword>
<keyword id="KW-0414">Isoprene biosynthesis</keyword>
<keyword id="KW-0479">Metal-binding</keyword>
<keyword id="KW-0560">Oxidoreductase</keyword>